<feature type="chain" id="PRO_1000072679" description="Nucleotide-binding protein VC0395_A2112/VC395_2645">
    <location>
        <begin position="1"/>
        <end position="286"/>
    </location>
</feature>
<feature type="binding site" evidence="1">
    <location>
        <begin position="8"/>
        <end position="15"/>
    </location>
    <ligand>
        <name>ATP</name>
        <dbReference type="ChEBI" id="CHEBI:30616"/>
    </ligand>
</feature>
<feature type="binding site" evidence="1">
    <location>
        <begin position="56"/>
        <end position="59"/>
    </location>
    <ligand>
        <name>GTP</name>
        <dbReference type="ChEBI" id="CHEBI:37565"/>
    </ligand>
</feature>
<comment type="function">
    <text evidence="1">Displays ATPase and GTPase activities.</text>
</comment>
<comment type="similarity">
    <text evidence="1">Belongs to the RapZ-like family.</text>
</comment>
<protein>
    <recommendedName>
        <fullName evidence="1">Nucleotide-binding protein VC0395_A2112/VC395_2645</fullName>
    </recommendedName>
</protein>
<gene>
    <name type="ordered locus">VC0395_A2112</name>
    <name type="ordered locus">VC395_2645</name>
</gene>
<proteinExistence type="inferred from homology"/>
<reference key="1">
    <citation type="submission" date="2007-03" db="EMBL/GenBank/DDBJ databases">
        <authorList>
            <person name="Heidelberg J."/>
        </authorList>
    </citation>
    <scope>NUCLEOTIDE SEQUENCE [LARGE SCALE GENOMIC DNA]</scope>
    <source>
        <strain>ATCC 39541 / Classical Ogawa 395 / O395</strain>
    </source>
</reference>
<reference key="2">
    <citation type="journal article" date="2008" name="PLoS ONE">
        <title>A recalibrated molecular clock and independent origins for the cholera pandemic clones.</title>
        <authorList>
            <person name="Feng L."/>
            <person name="Reeves P.R."/>
            <person name="Lan R."/>
            <person name="Ren Y."/>
            <person name="Gao C."/>
            <person name="Zhou Z."/>
            <person name="Ren Y."/>
            <person name="Cheng J."/>
            <person name="Wang W."/>
            <person name="Wang J."/>
            <person name="Qian W."/>
            <person name="Li D."/>
            <person name="Wang L."/>
        </authorList>
    </citation>
    <scope>NUCLEOTIDE SEQUENCE [LARGE SCALE GENOMIC DNA]</scope>
    <source>
        <strain>ATCC 39541 / Classical Ogawa 395 / O395</strain>
    </source>
</reference>
<dbReference type="EMBL" id="CP000627">
    <property type="protein sequence ID" value="ABQ20736.1"/>
    <property type="molecule type" value="Genomic_DNA"/>
</dbReference>
<dbReference type="EMBL" id="CP001235">
    <property type="protein sequence ID" value="ACP10631.1"/>
    <property type="molecule type" value="Genomic_DNA"/>
</dbReference>
<dbReference type="SMR" id="A5F5A9"/>
<dbReference type="KEGG" id="vco:VC0395_A2112"/>
<dbReference type="KEGG" id="vcr:VC395_2645"/>
<dbReference type="PATRIC" id="fig|345073.21.peg.2546"/>
<dbReference type="eggNOG" id="COG1660">
    <property type="taxonomic scope" value="Bacteria"/>
</dbReference>
<dbReference type="HOGENOM" id="CLU_059558_1_1_6"/>
<dbReference type="OrthoDB" id="9784461at2"/>
<dbReference type="Proteomes" id="UP000000249">
    <property type="component" value="Chromosome 2"/>
</dbReference>
<dbReference type="GO" id="GO:0005524">
    <property type="term" value="F:ATP binding"/>
    <property type="evidence" value="ECO:0007669"/>
    <property type="project" value="UniProtKB-UniRule"/>
</dbReference>
<dbReference type="GO" id="GO:0005525">
    <property type="term" value="F:GTP binding"/>
    <property type="evidence" value="ECO:0007669"/>
    <property type="project" value="UniProtKB-UniRule"/>
</dbReference>
<dbReference type="HAMAP" id="MF_00636">
    <property type="entry name" value="RapZ_like"/>
    <property type="match status" value="1"/>
</dbReference>
<dbReference type="InterPro" id="IPR027417">
    <property type="entry name" value="P-loop_NTPase"/>
</dbReference>
<dbReference type="InterPro" id="IPR005337">
    <property type="entry name" value="RapZ-like"/>
</dbReference>
<dbReference type="InterPro" id="IPR053930">
    <property type="entry name" value="RapZ-like_N"/>
</dbReference>
<dbReference type="InterPro" id="IPR053931">
    <property type="entry name" value="RapZ_C"/>
</dbReference>
<dbReference type="NCBIfam" id="NF003828">
    <property type="entry name" value="PRK05416.1"/>
    <property type="match status" value="1"/>
</dbReference>
<dbReference type="PANTHER" id="PTHR30448">
    <property type="entry name" value="RNASE ADAPTER PROTEIN RAPZ"/>
    <property type="match status" value="1"/>
</dbReference>
<dbReference type="PANTHER" id="PTHR30448:SF0">
    <property type="entry name" value="RNASE ADAPTER PROTEIN RAPZ"/>
    <property type="match status" value="1"/>
</dbReference>
<dbReference type="Pfam" id="PF22740">
    <property type="entry name" value="PapZ_C"/>
    <property type="match status" value="1"/>
</dbReference>
<dbReference type="Pfam" id="PF03668">
    <property type="entry name" value="RapZ-like_N"/>
    <property type="match status" value="1"/>
</dbReference>
<dbReference type="PIRSF" id="PIRSF005052">
    <property type="entry name" value="P-loopkin"/>
    <property type="match status" value="1"/>
</dbReference>
<dbReference type="SUPFAM" id="SSF52540">
    <property type="entry name" value="P-loop containing nucleoside triphosphate hydrolases"/>
    <property type="match status" value="1"/>
</dbReference>
<accession>A5F5A9</accession>
<accession>C3M520</accession>
<evidence type="ECO:0000255" key="1">
    <source>
        <dbReference type="HAMAP-Rule" id="MF_00636"/>
    </source>
</evidence>
<sequence>MRLIVVSGQSGAGKSVALRVLEDLGYYCVDNLPVSLLTAFIQSVQGSQQNVAVSIDIRNLPKEPSLVQDVLDQLKQNNDVSMLFLDASKETLLKRYSETRRIHPLSLSQSKPSLAQAIELEKQLLGPLKEQADLLLDSSNQSLHELSETVRMRIEGRERKDLVMVFQSFGFKYGLPTDADYVFDVRFLPNPHWEPDLRPLTGLDAPIKSFLEGHSEVMELKQQIQKFFEYWLPMLEKNNRSYLTIAIGCTGGKHRSVYLTQQLGEYFAQLGHQVQIRHTSLEKQQS</sequence>
<name>Y3312_VIBC3</name>
<organism>
    <name type="scientific">Vibrio cholerae serotype O1 (strain ATCC 39541 / Classical Ogawa 395 / O395)</name>
    <dbReference type="NCBI Taxonomy" id="345073"/>
    <lineage>
        <taxon>Bacteria</taxon>
        <taxon>Pseudomonadati</taxon>
        <taxon>Pseudomonadota</taxon>
        <taxon>Gammaproteobacteria</taxon>
        <taxon>Vibrionales</taxon>
        <taxon>Vibrionaceae</taxon>
        <taxon>Vibrio</taxon>
    </lineage>
</organism>
<keyword id="KW-0067">ATP-binding</keyword>
<keyword id="KW-0342">GTP-binding</keyword>
<keyword id="KW-0547">Nucleotide-binding</keyword>